<feature type="chain" id="PRO_0000118641" description="NADH dehydrogenase [ubiquinone] iron-sulfur protein 3">
    <location>
        <begin position="1"/>
        <end position="195"/>
    </location>
</feature>
<name>NDUS3_MARPO</name>
<sequence length="195" mass="23354">MDNQLFFKSLIATLPKWIHKCQTSKHENILYTNPNSLFQLLYFLKYHTNTRFKVLIDICGVDYPSRKRRFEVVYNLLSIDYNTRIRILTSVDEITPICSVVSIFPSAGWWERETWDMFGVYFSNHPDLRRILTDYGFEGHPLRKDFPLSGYVEVRYDDSEKRVVSEPIEMTQEFRYFDFASPWEQMSRSDESNQK</sequence>
<proteinExistence type="inferred from homology"/>
<geneLocation type="mitochondrion"/>
<organism>
    <name type="scientific">Marchantia polymorpha</name>
    <name type="common">Common liverwort</name>
    <name type="synonym">Marchantia aquatica</name>
    <dbReference type="NCBI Taxonomy" id="3197"/>
    <lineage>
        <taxon>Eukaryota</taxon>
        <taxon>Viridiplantae</taxon>
        <taxon>Streptophyta</taxon>
        <taxon>Embryophyta</taxon>
        <taxon>Marchantiophyta</taxon>
        <taxon>Marchantiopsida</taxon>
        <taxon>Marchantiidae</taxon>
        <taxon>Marchantiales</taxon>
        <taxon>Marchantiaceae</taxon>
        <taxon>Marchantia</taxon>
    </lineage>
</organism>
<reference key="1">
    <citation type="journal article" date="1992" name="J. Mol. Biol.">
        <title>Gene organization deduced from the complete sequence of liverwort Marchantia polymorpha mitochondrial DNA. A primitive form of plant mitochondrial genome.</title>
        <authorList>
            <person name="Oda K."/>
            <person name="Yamato K."/>
            <person name="Ohta E."/>
            <person name="Nakamura Y."/>
            <person name="Takemura M."/>
            <person name="Nozato N."/>
            <person name="Akashi K."/>
            <person name="Kanegae T."/>
            <person name="Ogura Y."/>
            <person name="Kohchi T."/>
            <person name="Ohyama K."/>
        </authorList>
    </citation>
    <scope>NUCLEOTIDE SEQUENCE [GENOMIC DNA]</scope>
</reference>
<evidence type="ECO:0000250" key="1"/>
<evidence type="ECO:0000305" key="2"/>
<dbReference type="EC" id="7.1.1.2"/>
<dbReference type="EMBL" id="M68929">
    <property type="protein sequence ID" value="AAC09443.1"/>
    <property type="status" value="ALT_INIT"/>
    <property type="molecule type" value="Genomic_DNA"/>
</dbReference>
<dbReference type="PIR" id="S25996">
    <property type="entry name" value="S25996"/>
</dbReference>
<dbReference type="RefSeq" id="NP_054446.1">
    <property type="nucleotide sequence ID" value="NC_001660.1"/>
</dbReference>
<dbReference type="SMR" id="P34944"/>
<dbReference type="GeneID" id="2948426"/>
<dbReference type="GO" id="GO:0005743">
    <property type="term" value="C:mitochondrial inner membrane"/>
    <property type="evidence" value="ECO:0007669"/>
    <property type="project" value="UniProtKB-SubCell"/>
</dbReference>
<dbReference type="GO" id="GO:0008137">
    <property type="term" value="F:NADH dehydrogenase (ubiquinone) activity"/>
    <property type="evidence" value="ECO:0007669"/>
    <property type="project" value="UniProtKB-EC"/>
</dbReference>
<dbReference type="FunFam" id="3.30.460.80:FF:000002">
    <property type="entry name" value="NADH dehydrogenase iron-sulfur protein 3, mitochondrial"/>
    <property type="match status" value="1"/>
</dbReference>
<dbReference type="Gene3D" id="3.30.460.80">
    <property type="entry name" value="NADH:ubiquinone oxidoreductase, 30kDa subunit"/>
    <property type="match status" value="1"/>
</dbReference>
<dbReference type="HAMAP" id="MF_01357">
    <property type="entry name" value="NDH1_NuoC"/>
    <property type="match status" value="1"/>
</dbReference>
<dbReference type="InterPro" id="IPR010218">
    <property type="entry name" value="NADH_DH_suC"/>
</dbReference>
<dbReference type="InterPro" id="IPR037232">
    <property type="entry name" value="NADH_quin_OxRdtase_su_C/D-like"/>
</dbReference>
<dbReference type="InterPro" id="IPR001268">
    <property type="entry name" value="NADH_UbQ_OxRdtase_30kDa_su"/>
</dbReference>
<dbReference type="InterPro" id="IPR020396">
    <property type="entry name" value="NADH_UbQ_OxRdtase_CS"/>
</dbReference>
<dbReference type="NCBIfam" id="TIGR01961">
    <property type="entry name" value="NuoC_fam"/>
    <property type="match status" value="1"/>
</dbReference>
<dbReference type="NCBIfam" id="NF004733">
    <property type="entry name" value="PRK06074.1-5"/>
    <property type="match status" value="1"/>
</dbReference>
<dbReference type="PANTHER" id="PTHR10884:SF14">
    <property type="entry name" value="NADH DEHYDROGENASE [UBIQUINONE] IRON-SULFUR PROTEIN 3, MITOCHONDRIAL"/>
    <property type="match status" value="1"/>
</dbReference>
<dbReference type="PANTHER" id="PTHR10884">
    <property type="entry name" value="NADH DEHYDROGENASE UBIQUINONE IRON-SULFUR PROTEIN 3"/>
    <property type="match status" value="1"/>
</dbReference>
<dbReference type="Pfam" id="PF00329">
    <property type="entry name" value="Complex1_30kDa"/>
    <property type="match status" value="1"/>
</dbReference>
<dbReference type="SUPFAM" id="SSF143243">
    <property type="entry name" value="Nqo5-like"/>
    <property type="match status" value="1"/>
</dbReference>
<dbReference type="PROSITE" id="PS00542">
    <property type="entry name" value="COMPLEX1_30K"/>
    <property type="match status" value="1"/>
</dbReference>
<gene>
    <name type="primary">NAD9</name>
</gene>
<comment type="function">
    <text evidence="1">Core subunit of the mitochondrial membrane respiratory chain NADH dehydrogenase (Complex I) that is believed to belong to the minimal assembly required for catalysis. Complex I functions in the transfer of electrons from NADH to the respiratory chain. The immediate electron acceptor for the enzyme is believed to be ubiquinone (By similarity).</text>
</comment>
<comment type="catalytic activity">
    <reaction>
        <text>a ubiquinone + NADH + 5 H(+)(in) = a ubiquinol + NAD(+) + 4 H(+)(out)</text>
        <dbReference type="Rhea" id="RHEA:29091"/>
        <dbReference type="Rhea" id="RHEA-COMP:9565"/>
        <dbReference type="Rhea" id="RHEA-COMP:9566"/>
        <dbReference type="ChEBI" id="CHEBI:15378"/>
        <dbReference type="ChEBI" id="CHEBI:16389"/>
        <dbReference type="ChEBI" id="CHEBI:17976"/>
        <dbReference type="ChEBI" id="CHEBI:57540"/>
        <dbReference type="ChEBI" id="CHEBI:57945"/>
        <dbReference type="EC" id="7.1.1.2"/>
    </reaction>
</comment>
<comment type="subunit">
    <text evidence="1">Complex I is composed of about 45 different subunits. This is a component of the iron-sulfur (IP) fragment of the enzyme (By similarity).</text>
</comment>
<comment type="subcellular location">
    <subcellularLocation>
        <location>Mitochondrion inner membrane</location>
    </subcellularLocation>
</comment>
<comment type="similarity">
    <text evidence="2">Belongs to the complex I 30 kDa subunit family.</text>
</comment>
<comment type="sequence caution" evidence="2">
    <conflict type="erroneous initiation">
        <sequence resource="EMBL-CDS" id="AAC09443"/>
    </conflict>
</comment>
<protein>
    <recommendedName>
        <fullName>NADH dehydrogenase [ubiquinone] iron-sulfur protein 3</fullName>
        <ecNumber>7.1.1.2</ecNumber>
    </recommendedName>
    <alternativeName>
        <fullName>NADH dehydrogenase subunit 9</fullName>
    </alternativeName>
</protein>
<accession>P34944</accession>
<keyword id="KW-0249">Electron transport</keyword>
<keyword id="KW-0472">Membrane</keyword>
<keyword id="KW-0496">Mitochondrion</keyword>
<keyword id="KW-0999">Mitochondrion inner membrane</keyword>
<keyword id="KW-0520">NAD</keyword>
<keyword id="KW-0560">Oxidoreductase</keyword>
<keyword id="KW-0679">Respiratory chain</keyword>
<keyword id="KW-1278">Translocase</keyword>
<keyword id="KW-0813">Transport</keyword>
<keyword id="KW-0830">Ubiquinone</keyword>